<dbReference type="EMBL" id="BC092025">
    <property type="protein sequence ID" value="AAH92025.1"/>
    <property type="status" value="ALT_FRAME"/>
    <property type="molecule type" value="mRNA"/>
</dbReference>
<dbReference type="EMBL" id="BC106218">
    <property type="protein sequence ID" value="AAI06219.1"/>
    <property type="molecule type" value="mRNA"/>
</dbReference>
<dbReference type="RefSeq" id="NP_001089321.1">
    <property type="nucleotide sequence ID" value="NM_001095852.1"/>
</dbReference>
<dbReference type="SMR" id="Q3B8M3"/>
<dbReference type="DNASU" id="734371"/>
<dbReference type="GeneID" id="734371"/>
<dbReference type="KEGG" id="xla:734371"/>
<dbReference type="AGR" id="Xenbase:XB-GENE-6251453"/>
<dbReference type="CTD" id="734371"/>
<dbReference type="Xenbase" id="XB-GENE-6251453">
    <property type="gene designation" value="eif3e.S"/>
</dbReference>
<dbReference type="OMA" id="NCPWILR"/>
<dbReference type="OrthoDB" id="417252at2759"/>
<dbReference type="Proteomes" id="UP000186698">
    <property type="component" value="Chromosome 6S"/>
</dbReference>
<dbReference type="Bgee" id="734371">
    <property type="expression patterns" value="Expressed in egg cell and 19 other cell types or tissues"/>
</dbReference>
<dbReference type="GO" id="GO:0016282">
    <property type="term" value="C:eukaryotic 43S preinitiation complex"/>
    <property type="evidence" value="ECO:0007669"/>
    <property type="project" value="UniProtKB-UniRule"/>
</dbReference>
<dbReference type="GO" id="GO:0033290">
    <property type="term" value="C:eukaryotic 48S preinitiation complex"/>
    <property type="evidence" value="ECO:0007669"/>
    <property type="project" value="UniProtKB-UniRule"/>
</dbReference>
<dbReference type="GO" id="GO:0005852">
    <property type="term" value="C:eukaryotic translation initiation factor 3 complex"/>
    <property type="evidence" value="ECO:0000250"/>
    <property type="project" value="UniProtKB"/>
</dbReference>
<dbReference type="GO" id="GO:0071540">
    <property type="term" value="C:eukaryotic translation initiation factor 3 complex, eIF3e"/>
    <property type="evidence" value="ECO:0007669"/>
    <property type="project" value="UniProtKB-UniRule"/>
</dbReference>
<dbReference type="GO" id="GO:0005634">
    <property type="term" value="C:nucleus"/>
    <property type="evidence" value="ECO:0000318"/>
    <property type="project" value="GO_Central"/>
</dbReference>
<dbReference type="GO" id="GO:0003743">
    <property type="term" value="F:translation initiation factor activity"/>
    <property type="evidence" value="ECO:0007669"/>
    <property type="project" value="UniProtKB-UniRule"/>
</dbReference>
<dbReference type="GO" id="GO:0001732">
    <property type="term" value="P:formation of cytoplasmic translation initiation complex"/>
    <property type="evidence" value="ECO:0007669"/>
    <property type="project" value="UniProtKB-UniRule"/>
</dbReference>
<dbReference type="GO" id="GO:0006413">
    <property type="term" value="P:translational initiation"/>
    <property type="evidence" value="ECO:0000250"/>
    <property type="project" value="UniProtKB"/>
</dbReference>
<dbReference type="CDD" id="cd21378">
    <property type="entry name" value="eIF3E"/>
    <property type="match status" value="1"/>
</dbReference>
<dbReference type="HAMAP" id="MF_03004">
    <property type="entry name" value="eIF3e"/>
    <property type="match status" value="1"/>
</dbReference>
<dbReference type="InterPro" id="IPR016650">
    <property type="entry name" value="eIF3e"/>
</dbReference>
<dbReference type="InterPro" id="IPR019010">
    <property type="entry name" value="eIF3e_N"/>
</dbReference>
<dbReference type="InterPro" id="IPR000717">
    <property type="entry name" value="PCI_dom"/>
</dbReference>
<dbReference type="InterPro" id="IPR036390">
    <property type="entry name" value="WH_DNA-bd_sf"/>
</dbReference>
<dbReference type="PANTHER" id="PTHR10317">
    <property type="entry name" value="EUKARYOTIC TRANSLATION INITIATION FACTOR 3 SUBUNIT E"/>
    <property type="match status" value="1"/>
</dbReference>
<dbReference type="Pfam" id="PF09440">
    <property type="entry name" value="eIF3_N"/>
    <property type="match status" value="1"/>
</dbReference>
<dbReference type="Pfam" id="PF21357">
    <property type="entry name" value="EIF3E_C"/>
    <property type="match status" value="1"/>
</dbReference>
<dbReference type="Pfam" id="PF01399">
    <property type="entry name" value="PCI"/>
    <property type="match status" value="1"/>
</dbReference>
<dbReference type="PIRSF" id="PIRSF016255">
    <property type="entry name" value="eIF3e_su6"/>
    <property type="match status" value="1"/>
</dbReference>
<dbReference type="SMART" id="SM01186">
    <property type="entry name" value="eIF3_N"/>
    <property type="match status" value="1"/>
</dbReference>
<dbReference type="SMART" id="SM00088">
    <property type="entry name" value="PINT"/>
    <property type="match status" value="1"/>
</dbReference>
<dbReference type="SUPFAM" id="SSF46785">
    <property type="entry name" value="Winged helix' DNA-binding domain"/>
    <property type="match status" value="1"/>
</dbReference>
<dbReference type="PROSITE" id="PS50250">
    <property type="entry name" value="PCI"/>
    <property type="match status" value="1"/>
</dbReference>
<sequence length="446" mass="52242">MAEYDLTTKIAHFLDRHLVFPLLEFLSVKEIYNEKELLHGKLDLLSDTNMVDFAMDVYKNLYADKEIPLALREKRTTVVAQLKQLQAETEPIVKMFEDPETTRQMQSTRDGRMLFDHLAEKHGFRQEYLDTLYRYAKFQYECGNYSGAAEYLYFFRVLVPSTDRNALSSLWGKLASEILMQNWDAAMEDLTRLKETIDNNTVSSPLQSLQHRTWLVHWSLFVFFNHPKGRDNIIDLFLYQPQYLNAIQTMCPHILRYLTTAVITNKDVRKRRQVLKDLVKVIQQESYTYKDPITEFVECLYVHFDFDGAQKKLRECESVLVNDFFLVACLEDFIENARLFIFETFCRIHQCISISMLADKLNMTPEEAERWIVNLIRNARLDAKIDSKLGHVVMGNNAVSPYQQVIEKTKSLAFRSQMLAMNIEKKSNQNSRTEAPTWAAQDSGFY</sequence>
<organism>
    <name type="scientific">Xenopus laevis</name>
    <name type="common">African clawed frog</name>
    <dbReference type="NCBI Taxonomy" id="8355"/>
    <lineage>
        <taxon>Eukaryota</taxon>
        <taxon>Metazoa</taxon>
        <taxon>Chordata</taxon>
        <taxon>Craniata</taxon>
        <taxon>Vertebrata</taxon>
        <taxon>Euteleostomi</taxon>
        <taxon>Amphibia</taxon>
        <taxon>Batrachia</taxon>
        <taxon>Anura</taxon>
        <taxon>Pipoidea</taxon>
        <taxon>Pipidae</taxon>
        <taxon>Xenopodinae</taxon>
        <taxon>Xenopus</taxon>
        <taxon>Xenopus</taxon>
    </lineage>
</organism>
<accession>Q3B8M3</accession>
<accession>Q58E90</accession>
<proteinExistence type="evidence at transcript level"/>
<reference key="1">
    <citation type="submission" date="2005-10" db="EMBL/GenBank/DDBJ databases">
        <authorList>
            <consortium name="NIH - Xenopus Gene Collection (XGC) project"/>
        </authorList>
    </citation>
    <scope>NUCLEOTIDE SEQUENCE [LARGE SCALE MRNA]</scope>
    <source>
        <tissue>Egg</tissue>
        <tissue>Testis</tissue>
    </source>
</reference>
<name>EI3EB_XENLA</name>
<evidence type="ECO:0000255" key="1">
    <source>
        <dbReference type="HAMAP-Rule" id="MF_03004"/>
    </source>
</evidence>
<evidence type="ECO:0000255" key="2">
    <source>
        <dbReference type="PROSITE-ProRule" id="PRU01185"/>
    </source>
</evidence>
<evidence type="ECO:0000256" key="3">
    <source>
        <dbReference type="SAM" id="MobiDB-lite"/>
    </source>
</evidence>
<evidence type="ECO:0000305" key="4"/>
<feature type="chain" id="PRO_0000365958" description="Eukaryotic translation initiation factor 3 subunit E-B">
    <location>
        <begin position="1"/>
        <end position="446"/>
    </location>
</feature>
<feature type="domain" description="PCI" evidence="2">
    <location>
        <begin position="222"/>
        <end position="399"/>
    </location>
</feature>
<feature type="region of interest" description="Disordered" evidence="3">
    <location>
        <begin position="425"/>
        <end position="446"/>
    </location>
</feature>
<comment type="function">
    <text evidence="1">Component of the eukaryotic translation initiation factor 3 (eIF-3) complex, which is involved in protein synthesis of a specialized repertoire of mRNAs and, together with other initiation factors, stimulates binding of mRNA and methionyl-tRNAi to the 40S ribosome. The eIF-3 complex specifically targets and initiates translation of a subset of mRNAs involved in cell proliferation.</text>
</comment>
<comment type="subunit">
    <text evidence="1">Component of the eukaryotic translation initiation factor 3 (eIF-3) complex, which is composed of 13 subunits: eif3a, eif3b, eif3c, eif3d, eif3e, eif3f, eif3g, eif3h, eif3i, eif3j, eif3k, eif3l and eif3m.</text>
</comment>
<comment type="subcellular location">
    <subcellularLocation>
        <location evidence="1">Cytoplasm</location>
    </subcellularLocation>
    <subcellularLocation>
        <location evidence="1">Nucleus</location>
    </subcellularLocation>
</comment>
<comment type="similarity">
    <text evidence="1">Belongs to the eIF-3 subunit E family.</text>
</comment>
<comment type="sequence caution" evidence="4">
    <conflict type="frameshift">
        <sequence resource="EMBL-CDS" id="AAH92025"/>
    </conflict>
</comment>
<keyword id="KW-0963">Cytoplasm</keyword>
<keyword id="KW-0396">Initiation factor</keyword>
<keyword id="KW-0539">Nucleus</keyword>
<keyword id="KW-0648">Protein biosynthesis</keyword>
<keyword id="KW-1185">Reference proteome</keyword>
<gene>
    <name type="primary">eif3e-b</name>
    <name type="synonym">eif3s6-b</name>
</gene>
<protein>
    <recommendedName>
        <fullName evidence="1">Eukaryotic translation initiation factor 3 subunit E-B</fullName>
        <shortName evidence="1">eIF3e-B</shortName>
    </recommendedName>
    <alternativeName>
        <fullName evidence="1">Eukaryotic translation initiation factor 3 subunit 6-B</fullName>
    </alternativeName>
</protein>